<gene>
    <name evidence="1" type="primary">ccmA</name>
    <name type="ordered locus">UTI89_C2479</name>
</gene>
<protein>
    <recommendedName>
        <fullName evidence="1">Cytochrome c biogenesis ATP-binding export protein CcmA</fullName>
        <ecNumber evidence="1">7.6.2.5</ecNumber>
    </recommendedName>
    <alternativeName>
        <fullName evidence="1">Heme exporter protein A</fullName>
    </alternativeName>
</protein>
<name>CCMA_ECOUT</name>
<proteinExistence type="inferred from homology"/>
<evidence type="ECO:0000255" key="1">
    <source>
        <dbReference type="HAMAP-Rule" id="MF_01707"/>
    </source>
</evidence>
<comment type="function">
    <text evidence="1">Part of the ABC transporter complex CcmAB involved in the biogenesis of c-type cytochromes; once thought to export heme, this seems not to be the case, but its exact role is uncertain. Responsible for energy coupling to the transport system.</text>
</comment>
<comment type="catalytic activity">
    <reaction evidence="1">
        <text>heme b(in) + ATP + H2O = heme b(out) + ADP + phosphate + H(+)</text>
        <dbReference type="Rhea" id="RHEA:19261"/>
        <dbReference type="ChEBI" id="CHEBI:15377"/>
        <dbReference type="ChEBI" id="CHEBI:15378"/>
        <dbReference type="ChEBI" id="CHEBI:30616"/>
        <dbReference type="ChEBI" id="CHEBI:43474"/>
        <dbReference type="ChEBI" id="CHEBI:60344"/>
        <dbReference type="ChEBI" id="CHEBI:456216"/>
        <dbReference type="EC" id="7.6.2.5"/>
    </reaction>
</comment>
<comment type="subunit">
    <text evidence="1">The complex is composed of two ATP-binding proteins (CcmA) and two transmembrane proteins (CcmB).</text>
</comment>
<comment type="subcellular location">
    <subcellularLocation>
        <location evidence="1">Cell inner membrane</location>
        <topology evidence="1">Peripheral membrane protein</topology>
    </subcellularLocation>
</comment>
<comment type="similarity">
    <text evidence="1">Belongs to the ABC transporter superfamily. CcmA exporter (TC 3.A.1.107) family.</text>
</comment>
<dbReference type="EC" id="7.6.2.5" evidence="1"/>
<dbReference type="EMBL" id="CP000243">
    <property type="protein sequence ID" value="ABE07946.1"/>
    <property type="molecule type" value="Genomic_DNA"/>
</dbReference>
<dbReference type="RefSeq" id="WP_000525586.1">
    <property type="nucleotide sequence ID" value="NZ_CP064825.1"/>
</dbReference>
<dbReference type="SMR" id="Q1R9L8"/>
<dbReference type="KEGG" id="eci:UTI89_C2479"/>
<dbReference type="HOGENOM" id="CLU_000604_1_2_6"/>
<dbReference type="Proteomes" id="UP000001952">
    <property type="component" value="Chromosome"/>
</dbReference>
<dbReference type="GO" id="GO:0005886">
    <property type="term" value="C:plasma membrane"/>
    <property type="evidence" value="ECO:0007669"/>
    <property type="project" value="UniProtKB-SubCell"/>
</dbReference>
<dbReference type="GO" id="GO:0015439">
    <property type="term" value="F:ABC-type heme transporter activity"/>
    <property type="evidence" value="ECO:0007669"/>
    <property type="project" value="UniProtKB-EC"/>
</dbReference>
<dbReference type="GO" id="GO:0005524">
    <property type="term" value="F:ATP binding"/>
    <property type="evidence" value="ECO:0007669"/>
    <property type="project" value="UniProtKB-KW"/>
</dbReference>
<dbReference type="GO" id="GO:0016887">
    <property type="term" value="F:ATP hydrolysis activity"/>
    <property type="evidence" value="ECO:0007669"/>
    <property type="project" value="InterPro"/>
</dbReference>
<dbReference type="GO" id="GO:0017004">
    <property type="term" value="P:cytochrome complex assembly"/>
    <property type="evidence" value="ECO:0007669"/>
    <property type="project" value="UniProtKB-KW"/>
</dbReference>
<dbReference type="CDD" id="cd03231">
    <property type="entry name" value="ABC_CcmA_heme_exporter"/>
    <property type="match status" value="1"/>
</dbReference>
<dbReference type="FunFam" id="3.40.50.300:FF:001098">
    <property type="entry name" value="Cytochrome c biogenesis ATP-binding export protein CcmA"/>
    <property type="match status" value="1"/>
</dbReference>
<dbReference type="Gene3D" id="3.40.50.300">
    <property type="entry name" value="P-loop containing nucleotide triphosphate hydrolases"/>
    <property type="match status" value="1"/>
</dbReference>
<dbReference type="InterPro" id="IPR003593">
    <property type="entry name" value="AAA+_ATPase"/>
</dbReference>
<dbReference type="InterPro" id="IPR003439">
    <property type="entry name" value="ABC_transporter-like_ATP-bd"/>
</dbReference>
<dbReference type="InterPro" id="IPR017871">
    <property type="entry name" value="ABC_transporter-like_CS"/>
</dbReference>
<dbReference type="InterPro" id="IPR005895">
    <property type="entry name" value="ABC_transptr_haem_export_CcmA"/>
</dbReference>
<dbReference type="InterPro" id="IPR027417">
    <property type="entry name" value="P-loop_NTPase"/>
</dbReference>
<dbReference type="NCBIfam" id="TIGR01189">
    <property type="entry name" value="ccmA"/>
    <property type="match status" value="1"/>
</dbReference>
<dbReference type="NCBIfam" id="NF010061">
    <property type="entry name" value="PRK13538.1"/>
    <property type="match status" value="1"/>
</dbReference>
<dbReference type="PANTHER" id="PTHR43499">
    <property type="entry name" value="ABC TRANSPORTER I FAMILY MEMBER 1"/>
    <property type="match status" value="1"/>
</dbReference>
<dbReference type="PANTHER" id="PTHR43499:SF1">
    <property type="entry name" value="ABC TRANSPORTER I FAMILY MEMBER 1"/>
    <property type="match status" value="1"/>
</dbReference>
<dbReference type="Pfam" id="PF00005">
    <property type="entry name" value="ABC_tran"/>
    <property type="match status" value="1"/>
</dbReference>
<dbReference type="SMART" id="SM00382">
    <property type="entry name" value="AAA"/>
    <property type="match status" value="1"/>
</dbReference>
<dbReference type="SUPFAM" id="SSF52540">
    <property type="entry name" value="P-loop containing nucleoside triphosphate hydrolases"/>
    <property type="match status" value="1"/>
</dbReference>
<dbReference type="PROSITE" id="PS00211">
    <property type="entry name" value="ABC_TRANSPORTER_1"/>
    <property type="match status" value="1"/>
</dbReference>
<dbReference type="PROSITE" id="PS50893">
    <property type="entry name" value="ABC_TRANSPORTER_2"/>
    <property type="match status" value="1"/>
</dbReference>
<dbReference type="PROSITE" id="PS51243">
    <property type="entry name" value="CCMA"/>
    <property type="match status" value="1"/>
</dbReference>
<organism>
    <name type="scientific">Escherichia coli (strain UTI89 / UPEC)</name>
    <dbReference type="NCBI Taxonomy" id="364106"/>
    <lineage>
        <taxon>Bacteria</taxon>
        <taxon>Pseudomonadati</taxon>
        <taxon>Pseudomonadota</taxon>
        <taxon>Gammaproteobacteria</taxon>
        <taxon>Enterobacterales</taxon>
        <taxon>Enterobacteriaceae</taxon>
        <taxon>Escherichia</taxon>
    </lineage>
</organism>
<sequence length="207" mass="22954">MGMLEARELLCERDERTLFSGLSFTLNAGEWVQITGSNGAGKTTLLRLLTGLSRPDAGEVLWQGQPLHQVRDSYHQNLLWIGHQPGIKTRLTALENLHFYHRDGDTAQCLEALAQAGLAGFEDIPVNQLSAGQQRRVALARLWLTRATLWILDEPFTAIDVNGVDRLTQRMAQHTEQGGIVILTTHQPLNVAESKIRRISLTQTGAA</sequence>
<accession>Q1R9L8</accession>
<feature type="chain" id="PRO_0000271922" description="Cytochrome c biogenesis ATP-binding export protein CcmA">
    <location>
        <begin position="1"/>
        <end position="207"/>
    </location>
</feature>
<feature type="domain" description="ABC transporter" evidence="1">
    <location>
        <begin position="4"/>
        <end position="207"/>
    </location>
</feature>
<feature type="binding site" evidence="1">
    <location>
        <begin position="36"/>
        <end position="43"/>
    </location>
    <ligand>
        <name>ATP</name>
        <dbReference type="ChEBI" id="CHEBI:30616"/>
    </ligand>
</feature>
<keyword id="KW-0067">ATP-binding</keyword>
<keyword id="KW-0997">Cell inner membrane</keyword>
<keyword id="KW-1003">Cell membrane</keyword>
<keyword id="KW-0201">Cytochrome c-type biogenesis</keyword>
<keyword id="KW-0472">Membrane</keyword>
<keyword id="KW-0547">Nucleotide-binding</keyword>
<keyword id="KW-1278">Translocase</keyword>
<keyword id="KW-0813">Transport</keyword>
<reference key="1">
    <citation type="journal article" date="2006" name="Proc. Natl. Acad. Sci. U.S.A.">
        <title>Identification of genes subject to positive selection in uropathogenic strains of Escherichia coli: a comparative genomics approach.</title>
        <authorList>
            <person name="Chen S.L."/>
            <person name="Hung C.-S."/>
            <person name="Xu J."/>
            <person name="Reigstad C.S."/>
            <person name="Magrini V."/>
            <person name="Sabo A."/>
            <person name="Blasiar D."/>
            <person name="Bieri T."/>
            <person name="Meyer R.R."/>
            <person name="Ozersky P."/>
            <person name="Armstrong J.R."/>
            <person name="Fulton R.S."/>
            <person name="Latreille J.P."/>
            <person name="Spieth J."/>
            <person name="Hooton T.M."/>
            <person name="Mardis E.R."/>
            <person name="Hultgren S.J."/>
            <person name="Gordon J.I."/>
        </authorList>
    </citation>
    <scope>NUCLEOTIDE SEQUENCE [LARGE SCALE GENOMIC DNA]</scope>
    <source>
        <strain>UTI89 / UPEC</strain>
    </source>
</reference>